<keyword id="KW-0119">Carbohydrate metabolism</keyword>
<keyword id="KW-0146">Chitin degradation</keyword>
<keyword id="KW-0903">Direct protein sequencing</keyword>
<keyword id="KW-0326">Glycosidase</keyword>
<keyword id="KW-0378">Hydrolase</keyword>
<keyword id="KW-0511">Multifunctional enzyme</keyword>
<keyword id="KW-0624">Polysaccharide degradation</keyword>
<keyword id="KW-0964">Secreted</keyword>
<feature type="chain" id="PRO_0000124810" description="Bifunctional chitinase/lysozyme">
    <location>
        <begin position="1"/>
        <end position="25" status="greater than"/>
    </location>
</feature>
<feature type="sequence conflict" description="In Ref. 2; AA sequence." evidence="1" ref="2">
    <original>E</original>
    <variation>S</variation>
    <location>
        <position position="3"/>
    </location>
</feature>
<feature type="non-consecutive residues" evidence="1">
    <location>
        <begin position="22"/>
        <end position="23"/>
    </location>
</feature>
<feature type="non-terminal residue">
    <location>
        <position position="25"/>
    </location>
</feature>
<evidence type="ECO:0000305" key="1"/>
<reference key="1">
    <citation type="journal article" date="1999" name="J. Mol. Evol.">
        <title>Papaya (Carica papaya) lysozyme is a member of the family 19 (basic, class II) chitinases.</title>
        <authorList>
            <person name="Subroto T."/>
            <person name="Sufiati S."/>
            <person name="Beintema J.J."/>
        </authorList>
    </citation>
    <scope>PROTEIN SEQUENCE OF 1-22</scope>
    <source>
        <tissue>Latex</tissue>
    </source>
</reference>
<reference key="2">
    <citation type="journal article" date="1969" name="J. Biol. Chem.">
        <title>Papaya lysozyme. Terminal sequences and enzymatic properties.</title>
        <authorList>
            <person name="Howard J.B."/>
            <person name="Glazer A.N."/>
        </authorList>
    </citation>
    <scope>PROTEIN SEQUENCE OF 1-5 AND 23-25</scope>
    <source>
        <tissue>Latex</tissue>
    </source>
</reference>
<dbReference type="EC" id="3.2.1.14"/>
<dbReference type="EC" id="3.2.1.17"/>
<dbReference type="Allergome" id="1272">
    <property type="allergen name" value="Cari p Chitinase"/>
</dbReference>
<dbReference type="CAZy" id="GH19">
    <property type="family name" value="Glycoside Hydrolase Family 19"/>
</dbReference>
<dbReference type="GO" id="GO:0005576">
    <property type="term" value="C:extracellular region"/>
    <property type="evidence" value="ECO:0007669"/>
    <property type="project" value="UniProtKB-SubCell"/>
</dbReference>
<dbReference type="GO" id="GO:0008843">
    <property type="term" value="F:endochitinase activity"/>
    <property type="evidence" value="ECO:0007669"/>
    <property type="project" value="UniProtKB-EC"/>
</dbReference>
<dbReference type="GO" id="GO:0003796">
    <property type="term" value="F:lysozyme activity"/>
    <property type="evidence" value="ECO:0007669"/>
    <property type="project" value="UniProtKB-EC"/>
</dbReference>
<dbReference type="GO" id="GO:0006032">
    <property type="term" value="P:chitin catabolic process"/>
    <property type="evidence" value="ECO:0007669"/>
    <property type="project" value="UniProtKB-KW"/>
</dbReference>
<dbReference type="GO" id="GO:0000272">
    <property type="term" value="P:polysaccharide catabolic process"/>
    <property type="evidence" value="ECO:0007669"/>
    <property type="project" value="UniProtKB-KW"/>
</dbReference>
<sequence length="25" mass="2877">GIEKIISRSMFDQMLKHRNNPASFG</sequence>
<protein>
    <recommendedName>
        <fullName>Bifunctional chitinase/lysozyme</fullName>
    </recommendedName>
    <domain>
        <recommendedName>
            <fullName>Chitinase</fullName>
            <ecNumber>3.2.1.14</ecNumber>
        </recommendedName>
    </domain>
    <domain>
        <recommendedName>
            <fullName>Lysozyme</fullName>
            <ecNumber>3.2.1.17</ecNumber>
        </recommendedName>
    </domain>
</protein>
<name>CHLY_CARPA</name>
<organism>
    <name type="scientific">Carica papaya</name>
    <name type="common">Papaya</name>
    <dbReference type="NCBI Taxonomy" id="3649"/>
    <lineage>
        <taxon>Eukaryota</taxon>
        <taxon>Viridiplantae</taxon>
        <taxon>Streptophyta</taxon>
        <taxon>Embryophyta</taxon>
        <taxon>Tracheophyta</taxon>
        <taxon>Spermatophyta</taxon>
        <taxon>Magnoliopsida</taxon>
        <taxon>eudicotyledons</taxon>
        <taxon>Gunneridae</taxon>
        <taxon>Pentapetalae</taxon>
        <taxon>rosids</taxon>
        <taxon>malvids</taxon>
        <taxon>Brassicales</taxon>
        <taxon>Caricaceae</taxon>
        <taxon>Carica</taxon>
    </lineage>
</organism>
<accession>P81241</accession>
<comment type="function">
    <text>Bifunctional enzyme with lysozyme/chitinase activity.</text>
</comment>
<comment type="catalytic activity">
    <reaction>
        <text>Random endo-hydrolysis of N-acetyl-beta-D-glucosaminide (1-&gt;4)-beta-linkages in chitin and chitodextrins.</text>
        <dbReference type="EC" id="3.2.1.14"/>
    </reaction>
</comment>
<comment type="catalytic activity">
    <reaction>
        <text>Hydrolysis of (1-&gt;4)-beta-linkages between N-acetylmuramic acid and N-acetyl-D-glucosamine residues in a peptidoglycan and between N-acetyl-D-glucosamine residues in chitodextrins.</text>
        <dbReference type="EC" id="3.2.1.17"/>
    </reaction>
</comment>
<comment type="subunit">
    <text>Monomer.</text>
</comment>
<comment type="subcellular location">
    <subcellularLocation>
        <location>Secreted</location>
        <location>Extracellular space</location>
    </subcellularLocation>
</comment>
<comment type="similarity">
    <text evidence="1">Belongs to the glycosyl hydrolase 19 family. Chitinase class I subfamily.</text>
</comment>
<proteinExistence type="evidence at protein level"/>